<evidence type="ECO:0000255" key="1">
    <source>
        <dbReference type="HAMAP-Rule" id="MF_00081"/>
    </source>
</evidence>
<dbReference type="EMBL" id="CP000480">
    <property type="protein sequence ID" value="ABK74546.1"/>
    <property type="molecule type" value="Genomic_DNA"/>
</dbReference>
<dbReference type="EMBL" id="CP001663">
    <property type="protein sequence ID" value="AFP40847.1"/>
    <property type="molecule type" value="Genomic_DNA"/>
</dbReference>
<dbReference type="RefSeq" id="WP_011729881.1">
    <property type="nucleotide sequence ID" value="NZ_SIJM01000026.1"/>
</dbReference>
<dbReference type="RefSeq" id="YP_888777.1">
    <property type="nucleotide sequence ID" value="NC_008596.1"/>
</dbReference>
<dbReference type="SMR" id="A0R0T9"/>
<dbReference type="STRING" id="246196.MSMEG_4505"/>
<dbReference type="PaxDb" id="246196-MSMEI_4393"/>
<dbReference type="GeneID" id="93459205"/>
<dbReference type="KEGG" id="msb:LJ00_22285"/>
<dbReference type="KEGG" id="msg:MSMEI_4393"/>
<dbReference type="KEGG" id="msm:MSMEG_4505"/>
<dbReference type="PATRIC" id="fig|246196.19.peg.4409"/>
<dbReference type="eggNOG" id="COG1420">
    <property type="taxonomic scope" value="Bacteria"/>
</dbReference>
<dbReference type="OrthoDB" id="9783139at2"/>
<dbReference type="Proteomes" id="UP000000757">
    <property type="component" value="Chromosome"/>
</dbReference>
<dbReference type="Proteomes" id="UP000006158">
    <property type="component" value="Chromosome"/>
</dbReference>
<dbReference type="GO" id="GO:0003677">
    <property type="term" value="F:DNA binding"/>
    <property type="evidence" value="ECO:0007669"/>
    <property type="project" value="InterPro"/>
</dbReference>
<dbReference type="GO" id="GO:0045892">
    <property type="term" value="P:negative regulation of DNA-templated transcription"/>
    <property type="evidence" value="ECO:0007669"/>
    <property type="project" value="UniProtKB-UniRule"/>
</dbReference>
<dbReference type="FunFam" id="1.10.10.10:FF:000049">
    <property type="entry name" value="Heat-inducible transcription repressor HrcA"/>
    <property type="match status" value="1"/>
</dbReference>
<dbReference type="Gene3D" id="3.30.450.40">
    <property type="match status" value="1"/>
</dbReference>
<dbReference type="Gene3D" id="3.30.390.60">
    <property type="entry name" value="Heat-inducible transcription repressor hrca homolog, domain 3"/>
    <property type="match status" value="1"/>
</dbReference>
<dbReference type="Gene3D" id="1.10.10.10">
    <property type="entry name" value="Winged helix-like DNA-binding domain superfamily/Winged helix DNA-binding domain"/>
    <property type="match status" value="1"/>
</dbReference>
<dbReference type="HAMAP" id="MF_00081">
    <property type="entry name" value="HrcA"/>
    <property type="match status" value="1"/>
</dbReference>
<dbReference type="InterPro" id="IPR029016">
    <property type="entry name" value="GAF-like_dom_sf"/>
</dbReference>
<dbReference type="InterPro" id="IPR002571">
    <property type="entry name" value="HrcA"/>
</dbReference>
<dbReference type="InterPro" id="IPR021153">
    <property type="entry name" value="HrcA_C"/>
</dbReference>
<dbReference type="InterPro" id="IPR036388">
    <property type="entry name" value="WH-like_DNA-bd_sf"/>
</dbReference>
<dbReference type="InterPro" id="IPR036390">
    <property type="entry name" value="WH_DNA-bd_sf"/>
</dbReference>
<dbReference type="InterPro" id="IPR023120">
    <property type="entry name" value="WHTH_transcript_rep_HrcA_IDD"/>
</dbReference>
<dbReference type="NCBIfam" id="TIGR00331">
    <property type="entry name" value="hrcA"/>
    <property type="match status" value="1"/>
</dbReference>
<dbReference type="PANTHER" id="PTHR34824">
    <property type="entry name" value="HEAT-INDUCIBLE TRANSCRIPTION REPRESSOR HRCA"/>
    <property type="match status" value="1"/>
</dbReference>
<dbReference type="PANTHER" id="PTHR34824:SF1">
    <property type="entry name" value="HEAT-INDUCIBLE TRANSCRIPTION REPRESSOR HRCA"/>
    <property type="match status" value="1"/>
</dbReference>
<dbReference type="Pfam" id="PF01628">
    <property type="entry name" value="HrcA"/>
    <property type="match status" value="1"/>
</dbReference>
<dbReference type="PIRSF" id="PIRSF005485">
    <property type="entry name" value="HrcA"/>
    <property type="match status" value="1"/>
</dbReference>
<dbReference type="SUPFAM" id="SSF55781">
    <property type="entry name" value="GAF domain-like"/>
    <property type="match status" value="1"/>
</dbReference>
<dbReference type="SUPFAM" id="SSF46785">
    <property type="entry name" value="Winged helix' DNA-binding domain"/>
    <property type="match status" value="1"/>
</dbReference>
<name>HRCA_MYCS2</name>
<organism>
    <name type="scientific">Mycolicibacterium smegmatis (strain ATCC 700084 / mc(2)155)</name>
    <name type="common">Mycobacterium smegmatis</name>
    <dbReference type="NCBI Taxonomy" id="246196"/>
    <lineage>
        <taxon>Bacteria</taxon>
        <taxon>Bacillati</taxon>
        <taxon>Actinomycetota</taxon>
        <taxon>Actinomycetes</taxon>
        <taxon>Mycobacteriales</taxon>
        <taxon>Mycobacteriaceae</taxon>
        <taxon>Mycolicibacterium</taxon>
    </lineage>
</organism>
<protein>
    <recommendedName>
        <fullName evidence="1">Heat-inducible transcription repressor HrcA</fullName>
    </recommendedName>
</protein>
<sequence length="343" mass="36748">MGSADDRRFEVLRAIVADFVATKEPIGSKTLVERHNLGVSSATVRNDMAVLEAEGYITQPHTSSGRVPTEKGYREFVDRIDNVKPLSSSERRAILNFLESGVDLDDVLRRAVRLLAQLTRQVAIVQYPTLSTSSVRHLEVVALTPARLLLVVITDTGRVDQRIVELGDAIDEHELSKLRDMLGQAMEGKPLAQASIAVSDLASHLNGSDRLGDAVGRAATVLVETLVEHTEERLLLGGTANLTRNTADFGGSLRSVLEALEEQVVVLRLLAAQQEAGKVTVRIGHETEAEQMAGASVVSTAYGSSGKVYGGMGVVGPTRMDYPGTIANVAAVALYIGEVLGSR</sequence>
<reference key="1">
    <citation type="submission" date="2006-10" db="EMBL/GenBank/DDBJ databases">
        <authorList>
            <person name="Fleischmann R.D."/>
            <person name="Dodson R.J."/>
            <person name="Haft D.H."/>
            <person name="Merkel J.S."/>
            <person name="Nelson W.C."/>
            <person name="Fraser C.M."/>
        </authorList>
    </citation>
    <scope>NUCLEOTIDE SEQUENCE [LARGE SCALE GENOMIC DNA]</scope>
    <source>
        <strain>ATCC 700084 / mc(2)155</strain>
    </source>
</reference>
<reference key="2">
    <citation type="journal article" date="2007" name="Genome Biol.">
        <title>Interrupted coding sequences in Mycobacterium smegmatis: authentic mutations or sequencing errors?</title>
        <authorList>
            <person name="Deshayes C."/>
            <person name="Perrodou E."/>
            <person name="Gallien S."/>
            <person name="Euphrasie D."/>
            <person name="Schaeffer C."/>
            <person name="Van-Dorsselaer A."/>
            <person name="Poch O."/>
            <person name="Lecompte O."/>
            <person name="Reyrat J.-M."/>
        </authorList>
    </citation>
    <scope>NUCLEOTIDE SEQUENCE [LARGE SCALE GENOMIC DNA]</scope>
    <source>
        <strain>ATCC 700084 / mc(2)155</strain>
    </source>
</reference>
<reference key="3">
    <citation type="journal article" date="2009" name="Genome Res.">
        <title>Ortho-proteogenomics: multiple proteomes investigation through orthology and a new MS-based protocol.</title>
        <authorList>
            <person name="Gallien S."/>
            <person name="Perrodou E."/>
            <person name="Carapito C."/>
            <person name="Deshayes C."/>
            <person name="Reyrat J.-M."/>
            <person name="Van Dorsselaer A."/>
            <person name="Poch O."/>
            <person name="Schaeffer C."/>
            <person name="Lecompte O."/>
        </authorList>
    </citation>
    <scope>NUCLEOTIDE SEQUENCE [LARGE SCALE GENOMIC DNA]</scope>
    <scope>IDENTIFICATION BY MASS SPECTROMETRY [LARGE SCALE ANALYSIS]</scope>
    <source>
        <strain>ATCC 700084 / mc(2)155</strain>
    </source>
</reference>
<feature type="chain" id="PRO_1000010427" description="Heat-inducible transcription repressor HrcA">
    <location>
        <begin position="1"/>
        <end position="343"/>
    </location>
</feature>
<proteinExistence type="evidence at protein level"/>
<accession>A0R0T9</accession>
<accession>I7G5B5</accession>
<keyword id="KW-1185">Reference proteome</keyword>
<keyword id="KW-0678">Repressor</keyword>
<keyword id="KW-0346">Stress response</keyword>
<keyword id="KW-0804">Transcription</keyword>
<keyword id="KW-0805">Transcription regulation</keyword>
<gene>
    <name evidence="1" type="primary">hrcA</name>
    <name type="ordered locus">MSMEG_4505</name>
    <name type="ordered locus">MSMEI_4393</name>
</gene>
<comment type="function">
    <text evidence="1">Negative regulator of class I heat shock genes (grpE-dnaK-dnaJ and groELS operons). Prevents heat-shock induction of these operons.</text>
</comment>
<comment type="similarity">
    <text evidence="1">Belongs to the HrcA family.</text>
</comment>